<keyword id="KW-0238">DNA-binding</keyword>
<keyword id="KW-1185">Reference proteome</keyword>
<keyword id="KW-0804">Transcription</keyword>
<keyword id="KW-0805">Transcription regulation</keyword>
<dbReference type="EMBL" id="AM942759">
    <property type="protein sequence ID" value="CAR44078.1"/>
    <property type="molecule type" value="Genomic_DNA"/>
</dbReference>
<dbReference type="RefSeq" id="WP_004244059.1">
    <property type="nucleotide sequence ID" value="NC_010554.1"/>
</dbReference>
<dbReference type="SMR" id="B4F0Q1"/>
<dbReference type="EnsemblBacteria" id="CAR44078">
    <property type="protein sequence ID" value="CAR44078"/>
    <property type="gene ID" value="PMI2033"/>
</dbReference>
<dbReference type="GeneID" id="6801004"/>
<dbReference type="KEGG" id="pmr:PMI2033"/>
<dbReference type="eggNOG" id="COG0583">
    <property type="taxonomic scope" value="Bacteria"/>
</dbReference>
<dbReference type="HOGENOM" id="CLU_063829_0_0_6"/>
<dbReference type="Proteomes" id="UP000008319">
    <property type="component" value="Chromosome"/>
</dbReference>
<dbReference type="GO" id="GO:0003677">
    <property type="term" value="F:DNA binding"/>
    <property type="evidence" value="ECO:0007669"/>
    <property type="project" value="UniProtKB-UniRule"/>
</dbReference>
<dbReference type="GO" id="GO:0003700">
    <property type="term" value="F:DNA-binding transcription factor activity"/>
    <property type="evidence" value="ECO:0007669"/>
    <property type="project" value="UniProtKB-UniRule"/>
</dbReference>
<dbReference type="CDD" id="cd08428">
    <property type="entry name" value="PBP2_IciA_ArgP"/>
    <property type="match status" value="1"/>
</dbReference>
<dbReference type="FunFam" id="1.10.10.10:FF:000061">
    <property type="entry name" value="HTH-type transcriptional regulator ArgP"/>
    <property type="match status" value="1"/>
</dbReference>
<dbReference type="Gene3D" id="3.40.190.290">
    <property type="match status" value="1"/>
</dbReference>
<dbReference type="Gene3D" id="1.10.10.10">
    <property type="entry name" value="Winged helix-like DNA-binding domain superfamily/Winged helix DNA-binding domain"/>
    <property type="match status" value="1"/>
</dbReference>
<dbReference type="HAMAP" id="MF_00513">
    <property type="entry name" value="HTH_type_ArgP"/>
    <property type="match status" value="1"/>
</dbReference>
<dbReference type="InterPro" id="IPR017685">
    <property type="entry name" value="ArgP"/>
</dbReference>
<dbReference type="InterPro" id="IPR023490">
    <property type="entry name" value="ArgP_gammaproteobact"/>
</dbReference>
<dbReference type="InterPro" id="IPR050176">
    <property type="entry name" value="LTTR"/>
</dbReference>
<dbReference type="InterPro" id="IPR005119">
    <property type="entry name" value="LysR_subst-bd"/>
</dbReference>
<dbReference type="InterPro" id="IPR000847">
    <property type="entry name" value="Tscrpt_reg_HTH_LysR"/>
</dbReference>
<dbReference type="InterPro" id="IPR036388">
    <property type="entry name" value="WH-like_DNA-bd_sf"/>
</dbReference>
<dbReference type="InterPro" id="IPR036390">
    <property type="entry name" value="WH_DNA-bd_sf"/>
</dbReference>
<dbReference type="NCBIfam" id="TIGR03298">
    <property type="entry name" value="argP"/>
    <property type="match status" value="1"/>
</dbReference>
<dbReference type="NCBIfam" id="NF002964">
    <property type="entry name" value="PRK03635.1"/>
    <property type="match status" value="1"/>
</dbReference>
<dbReference type="NCBIfam" id="NF009888">
    <property type="entry name" value="PRK13348.1"/>
    <property type="match status" value="1"/>
</dbReference>
<dbReference type="PANTHER" id="PTHR30579:SF2">
    <property type="entry name" value="HTH-TYPE TRANSCRIPTIONAL REGULATOR ARGP"/>
    <property type="match status" value="1"/>
</dbReference>
<dbReference type="PANTHER" id="PTHR30579">
    <property type="entry name" value="TRANSCRIPTIONAL REGULATOR"/>
    <property type="match status" value="1"/>
</dbReference>
<dbReference type="Pfam" id="PF00126">
    <property type="entry name" value="HTH_1"/>
    <property type="match status" value="1"/>
</dbReference>
<dbReference type="Pfam" id="PF03466">
    <property type="entry name" value="LysR_substrate"/>
    <property type="match status" value="1"/>
</dbReference>
<dbReference type="PRINTS" id="PR00039">
    <property type="entry name" value="HTHLYSR"/>
</dbReference>
<dbReference type="SUPFAM" id="SSF53850">
    <property type="entry name" value="Periplasmic binding protein-like II"/>
    <property type="match status" value="1"/>
</dbReference>
<dbReference type="SUPFAM" id="SSF46785">
    <property type="entry name" value="Winged helix' DNA-binding domain"/>
    <property type="match status" value="1"/>
</dbReference>
<dbReference type="PROSITE" id="PS50931">
    <property type="entry name" value="HTH_LYSR"/>
    <property type="match status" value="1"/>
</dbReference>
<feature type="chain" id="PRO_1000127277" description="HTH-type transcriptional regulator ArgP">
    <location>
        <begin position="1"/>
        <end position="299"/>
    </location>
</feature>
<feature type="domain" description="HTH lysR-type" evidence="1">
    <location>
        <begin position="4"/>
        <end position="60"/>
    </location>
</feature>
<feature type="DNA-binding region" description="H-T-H motif" evidence="1">
    <location>
        <begin position="21"/>
        <end position="40"/>
    </location>
</feature>
<evidence type="ECO:0000255" key="1">
    <source>
        <dbReference type="HAMAP-Rule" id="MF_00513"/>
    </source>
</evidence>
<evidence type="ECO:0000305" key="2"/>
<proteinExistence type="inferred from homology"/>
<name>ARGP_PROMH</name>
<sequence length="299" mass="33458">MKRPDYRALQALDAVIRERGFERAAQKLCITQSAVSQRIKQLENLFGQPLLVRTVPPQPTEQGQKLLALLHQVEMLEEQWLGDENSGSTPLLLSLAVNADSLATWLLPALHPVLTQLPIRLNIQVEDETRTQERLRRGEVVGAISIQPQALPSCLVDQLGALDYLFVASPDFAQRYFANGVTKSSLLKAPAVAFDHLDDMHQAFLQQNFGLSPGSVPCHIVNSSEAFVQLAKQGSTCCMIPHLQIADELKSGELIDLTPGLCQRRMLYWHRFAPESRTMRKVTDALLDYGRKVLKQDEE</sequence>
<accession>B4F0Q1</accession>
<organism>
    <name type="scientific">Proteus mirabilis (strain HI4320)</name>
    <dbReference type="NCBI Taxonomy" id="529507"/>
    <lineage>
        <taxon>Bacteria</taxon>
        <taxon>Pseudomonadati</taxon>
        <taxon>Pseudomonadota</taxon>
        <taxon>Gammaproteobacteria</taxon>
        <taxon>Enterobacterales</taxon>
        <taxon>Morganellaceae</taxon>
        <taxon>Proteus</taxon>
    </lineage>
</organism>
<gene>
    <name evidence="1" type="primary">argP</name>
    <name type="synonym">iciA</name>
    <name type="ordered locus">PMI2033</name>
</gene>
<protein>
    <recommendedName>
        <fullName evidence="1">HTH-type transcriptional regulator ArgP</fullName>
    </recommendedName>
</protein>
<reference key="1">
    <citation type="journal article" date="2008" name="J. Bacteriol.">
        <title>Complete genome sequence of uropathogenic Proteus mirabilis, a master of both adherence and motility.</title>
        <authorList>
            <person name="Pearson M.M."/>
            <person name="Sebaihia M."/>
            <person name="Churcher C."/>
            <person name="Quail M.A."/>
            <person name="Seshasayee A.S."/>
            <person name="Luscombe N.M."/>
            <person name="Abdellah Z."/>
            <person name="Arrosmith C."/>
            <person name="Atkin B."/>
            <person name="Chillingworth T."/>
            <person name="Hauser H."/>
            <person name="Jagels K."/>
            <person name="Moule S."/>
            <person name="Mungall K."/>
            <person name="Norbertczak H."/>
            <person name="Rabbinowitsch E."/>
            <person name="Walker D."/>
            <person name="Whithead S."/>
            <person name="Thomson N.R."/>
            <person name="Rather P.N."/>
            <person name="Parkhill J."/>
            <person name="Mobley H.L.T."/>
        </authorList>
    </citation>
    <scope>NUCLEOTIDE SEQUENCE [LARGE SCALE GENOMIC DNA]</scope>
    <source>
        <strain>HI4320</strain>
    </source>
</reference>
<comment type="function">
    <text evidence="1">Controls the transcription of genes involved in arginine and lysine metabolism.</text>
</comment>
<comment type="subunit">
    <text evidence="1">Homodimer.</text>
</comment>
<comment type="similarity">
    <text evidence="2">Belongs to the LysR transcriptional regulatory family.</text>
</comment>